<dbReference type="EMBL" id="D16359">
    <property type="protein sequence ID" value="BAA23636.1"/>
    <property type="molecule type" value="Genomic_DNA"/>
</dbReference>
<dbReference type="EMBL" id="AF158101">
    <property type="protein sequence ID" value="AAD42562.1"/>
    <property type="molecule type" value="Genomic_DNA"/>
</dbReference>
<dbReference type="PIR" id="S52615">
    <property type="entry name" value="S52615"/>
</dbReference>
<dbReference type="RefSeq" id="NP_049888.1">
    <property type="nucleotide sequence ID" value="NC_000866.4"/>
</dbReference>
<dbReference type="SMR" id="P39251"/>
<dbReference type="GeneID" id="1258677"/>
<dbReference type="KEGG" id="vg:1258677"/>
<dbReference type="OrthoDB" id="23296at10239"/>
<dbReference type="Proteomes" id="UP000009087">
    <property type="component" value="Segment"/>
</dbReference>
<dbReference type="InterPro" id="IPR054052">
    <property type="entry name" value="Y16Q-like"/>
</dbReference>
<dbReference type="Pfam" id="PF21825">
    <property type="entry name" value="crAss001_48"/>
    <property type="match status" value="1"/>
</dbReference>
<organism>
    <name type="scientific">Enterobacteria phage T4</name>
    <name type="common">Bacteriophage T4</name>
    <dbReference type="NCBI Taxonomy" id="10665"/>
    <lineage>
        <taxon>Viruses</taxon>
        <taxon>Duplodnaviria</taxon>
        <taxon>Heunggongvirae</taxon>
        <taxon>Uroviricota</taxon>
        <taxon>Caudoviricetes</taxon>
        <taxon>Straboviridae</taxon>
        <taxon>Tevenvirinae</taxon>
        <taxon>Tequatrovirus</taxon>
    </lineage>
</organism>
<sequence>MLAYQARVKEEYDQLMLKINALSKFLESAKFLTVSAVEQELLLSQFISMKSYAECLEKRIAQFK</sequence>
<gene>
    <name type="primary">y16Q</name>
    <name type="synonym">denB.1</name>
</gene>
<name>Y16Q_BPT4</name>
<organismHost>
    <name type="scientific">Escherichia coli</name>
    <dbReference type="NCBI Taxonomy" id="562"/>
</organismHost>
<protein>
    <recommendedName>
        <fullName>Uncharacterized 7.5 kDa protein in denB-rIIB intergenic region</fullName>
    </recommendedName>
</protein>
<reference key="1">
    <citation type="submission" date="1993-06" db="EMBL/GenBank/DDBJ databases">
        <authorList>
            <person name="Ikeda H."/>
        </authorList>
    </citation>
    <scope>NUCLEOTIDE SEQUENCE [GENOMIC DNA]</scope>
</reference>
<reference key="2">
    <citation type="journal article" date="2003" name="Microbiol. Mol. Biol. Rev.">
        <title>Bacteriophage T4 genome.</title>
        <authorList>
            <person name="Miller E.S."/>
            <person name="Kutter E."/>
            <person name="Mosig G."/>
            <person name="Arisaka F."/>
            <person name="Kunisawa T."/>
            <person name="Ruger W."/>
        </authorList>
    </citation>
    <scope>NUCLEOTIDE SEQUENCE [LARGE SCALE GENOMIC DNA]</scope>
</reference>
<feature type="chain" id="PRO_0000165213" description="Uncharacterized 7.5 kDa protein in denB-rIIB intergenic region">
    <location>
        <begin position="1"/>
        <end position="64"/>
    </location>
</feature>
<feature type="sequence conflict" description="In Ref. 1; BAA23636." evidence="1" ref="1">
    <original>A</original>
    <variation>G</variation>
    <location>
        <position position="3"/>
    </location>
</feature>
<accession>P39251</accession>
<accession>Q9T0S3</accession>
<evidence type="ECO:0000305" key="1"/>
<keyword id="KW-1185">Reference proteome</keyword>
<proteinExistence type="predicted"/>